<comment type="function">
    <text evidence="1">Required for ubiquinone (coenzyme Q) biosynthesis. Binds hydrophobic ubiquinone biosynthetic intermediates via its SCP2 domain and is essential for the stability of the Ubi complex. May constitute a docking platform where Ubi enzymes assemble and access their SCP2-bound polyprenyl substrates.</text>
</comment>
<comment type="pathway">
    <text evidence="1">Cofactor biosynthesis; ubiquinone biosynthesis.</text>
</comment>
<comment type="subcellular location">
    <subcellularLocation>
        <location evidence="1">Cytoplasm</location>
    </subcellularLocation>
</comment>
<comment type="similarity">
    <text evidence="1">Belongs to the UbiJ family.</text>
</comment>
<name>UBIJ_SHIFL</name>
<accession>P0ADP8</accession>
<accession>P27852</accession>
<proteinExistence type="inferred from homology"/>
<organism>
    <name type="scientific">Shigella flexneri</name>
    <dbReference type="NCBI Taxonomy" id="623"/>
    <lineage>
        <taxon>Bacteria</taxon>
        <taxon>Pseudomonadati</taxon>
        <taxon>Pseudomonadota</taxon>
        <taxon>Gammaproteobacteria</taxon>
        <taxon>Enterobacterales</taxon>
        <taxon>Enterobacteriaceae</taxon>
        <taxon>Shigella</taxon>
    </lineage>
</organism>
<keyword id="KW-0963">Cytoplasm</keyword>
<keyword id="KW-1185">Reference proteome</keyword>
<keyword id="KW-0831">Ubiquinone biosynthesis</keyword>
<reference key="1">
    <citation type="journal article" date="2002" name="Nucleic Acids Res.">
        <title>Genome sequence of Shigella flexneri 2a: insights into pathogenicity through comparison with genomes of Escherichia coli K12 and O157.</title>
        <authorList>
            <person name="Jin Q."/>
            <person name="Yuan Z."/>
            <person name="Xu J."/>
            <person name="Wang Y."/>
            <person name="Shen Y."/>
            <person name="Lu W."/>
            <person name="Wang J."/>
            <person name="Liu H."/>
            <person name="Yang J."/>
            <person name="Yang F."/>
            <person name="Zhang X."/>
            <person name="Zhang J."/>
            <person name="Yang G."/>
            <person name="Wu H."/>
            <person name="Qu D."/>
            <person name="Dong J."/>
            <person name="Sun L."/>
            <person name="Xue Y."/>
            <person name="Zhao A."/>
            <person name="Gao Y."/>
            <person name="Zhu J."/>
            <person name="Kan B."/>
            <person name="Ding K."/>
            <person name="Chen S."/>
            <person name="Cheng H."/>
            <person name="Yao Z."/>
            <person name="He B."/>
            <person name="Chen R."/>
            <person name="Ma D."/>
            <person name="Qiang B."/>
            <person name="Wen Y."/>
            <person name="Hou Y."/>
            <person name="Yu J."/>
        </authorList>
    </citation>
    <scope>NUCLEOTIDE SEQUENCE [LARGE SCALE GENOMIC DNA]</scope>
    <source>
        <strain>301 / Serotype 2a</strain>
    </source>
</reference>
<reference key="2">
    <citation type="journal article" date="2003" name="Infect. Immun.">
        <title>Complete genome sequence and comparative genomics of Shigella flexneri serotype 2a strain 2457T.</title>
        <authorList>
            <person name="Wei J."/>
            <person name="Goldberg M.B."/>
            <person name="Burland V."/>
            <person name="Venkatesan M.M."/>
            <person name="Deng W."/>
            <person name="Fournier G."/>
            <person name="Mayhew G.F."/>
            <person name="Plunkett G. III"/>
            <person name="Rose D.J."/>
            <person name="Darling A."/>
            <person name="Mau B."/>
            <person name="Perna N.T."/>
            <person name="Payne S.M."/>
            <person name="Runyen-Janecky L.J."/>
            <person name="Zhou S."/>
            <person name="Schwartz D.C."/>
            <person name="Blattner F.R."/>
        </authorList>
    </citation>
    <scope>NUCLEOTIDE SEQUENCE [LARGE SCALE GENOMIC DNA]</scope>
    <source>
        <strain>ATCC 700930 / 2457T / Serotype 2a</strain>
    </source>
</reference>
<feature type="chain" id="PRO_0000169669" description="Ubiquinone biosynthesis accessory factor UbiJ">
    <location>
        <begin position="1"/>
        <end position="201"/>
    </location>
</feature>
<feature type="domain" description="SCP2" evidence="1">
    <location>
        <begin position="15"/>
        <end position="112"/>
    </location>
</feature>
<sequence>MPFKPLVTAGIESLLNTFLYRSPALKTARSRLLGKVLRVEVKGFSTSLILVFSERQVDVLGEWAGDADCTVIAYASVLPKLRDRQQLTALIRSGELEVQGDIQVVQNFVALADLAEFDPAELLAPYTGDIAAEGISKAMRGGAKFLHHGIKRQQRYVAEAITEEWRMAPGPLEVAWFAEETAAVERAVDALTKRLEKLEAK</sequence>
<evidence type="ECO:0000255" key="1">
    <source>
        <dbReference type="HAMAP-Rule" id="MF_02215"/>
    </source>
</evidence>
<evidence type="ECO:0000312" key="2">
    <source>
        <dbReference type="EMBL" id="AAN45347.2"/>
    </source>
</evidence>
<evidence type="ECO:0000312" key="3">
    <source>
        <dbReference type="EMBL" id="AAP18851.1"/>
    </source>
</evidence>
<dbReference type="EMBL" id="AE005674">
    <property type="protein sequence ID" value="AAN45347.2"/>
    <property type="molecule type" value="Genomic_DNA"/>
</dbReference>
<dbReference type="EMBL" id="AE014073">
    <property type="protein sequence ID" value="AAP18851.1"/>
    <property type="molecule type" value="Genomic_DNA"/>
</dbReference>
<dbReference type="RefSeq" id="NP_709640.2">
    <property type="nucleotide sequence ID" value="NC_004337.2"/>
</dbReference>
<dbReference type="RefSeq" id="WP_001295259.1">
    <property type="nucleotide sequence ID" value="NZ_WPGW01000036.1"/>
</dbReference>
<dbReference type="SMR" id="P0ADP8"/>
<dbReference type="STRING" id="198214.SF3912"/>
<dbReference type="PaxDb" id="198214-SF3912"/>
<dbReference type="GeneID" id="1025101"/>
<dbReference type="GeneID" id="93778101"/>
<dbReference type="KEGG" id="sfl:SF3912"/>
<dbReference type="KEGG" id="sfx:S3842"/>
<dbReference type="PATRIC" id="fig|198214.7.peg.4612"/>
<dbReference type="HOGENOM" id="CLU_100130_2_0_6"/>
<dbReference type="UniPathway" id="UPA00232"/>
<dbReference type="Proteomes" id="UP000001006">
    <property type="component" value="Chromosome"/>
</dbReference>
<dbReference type="Proteomes" id="UP000002673">
    <property type="component" value="Chromosome"/>
</dbReference>
<dbReference type="GO" id="GO:0005737">
    <property type="term" value="C:cytoplasm"/>
    <property type="evidence" value="ECO:0007669"/>
    <property type="project" value="UniProtKB-SubCell"/>
</dbReference>
<dbReference type="GO" id="GO:0006744">
    <property type="term" value="P:ubiquinone biosynthetic process"/>
    <property type="evidence" value="ECO:0007669"/>
    <property type="project" value="UniProtKB-UniRule"/>
</dbReference>
<dbReference type="HAMAP" id="MF_02215">
    <property type="entry name" value="UbiJ"/>
    <property type="match status" value="1"/>
</dbReference>
<dbReference type="InterPro" id="IPR003033">
    <property type="entry name" value="SCP2_sterol-bd_dom"/>
</dbReference>
<dbReference type="InterPro" id="IPR036527">
    <property type="entry name" value="SCP2_sterol-bd_dom_sf"/>
</dbReference>
<dbReference type="InterPro" id="IPR038989">
    <property type="entry name" value="UbiJ"/>
</dbReference>
<dbReference type="PANTHER" id="PTHR38693:SF1">
    <property type="entry name" value="UBIQUINONE BIOSYNTHESIS ACCESSORY FACTOR UBIJ"/>
    <property type="match status" value="1"/>
</dbReference>
<dbReference type="PANTHER" id="PTHR38693">
    <property type="entry name" value="UBIQUINONE BIOSYNTHESIS PROTEIN UBIJ"/>
    <property type="match status" value="1"/>
</dbReference>
<dbReference type="Pfam" id="PF02036">
    <property type="entry name" value="SCP2"/>
    <property type="match status" value="1"/>
</dbReference>
<dbReference type="SUPFAM" id="SSF55718">
    <property type="entry name" value="SCP-like"/>
    <property type="match status" value="1"/>
</dbReference>
<gene>
    <name evidence="1" type="primary">ubiJ</name>
    <name evidence="2 3" type="synonym">yigP</name>
    <name evidence="2" type="ordered locus">SF3912</name>
    <name evidence="3" type="ordered locus">S3842</name>
</gene>
<protein>
    <recommendedName>
        <fullName evidence="1">Ubiquinone biosynthesis accessory factor UbiJ</fullName>
    </recommendedName>
</protein>